<name>PYRB_SYNC1</name>
<reference key="1">
    <citation type="submission" date="2005-10" db="EMBL/GenBank/DDBJ databases">
        <title>Complete sequence of Pelobacter carbinolicus DSM 2380.</title>
        <authorList>
            <person name="Copeland A."/>
            <person name="Lucas S."/>
            <person name="Lapidus A."/>
            <person name="Barry K."/>
            <person name="Detter J.C."/>
            <person name="Glavina T."/>
            <person name="Hammon N."/>
            <person name="Israni S."/>
            <person name="Pitluck S."/>
            <person name="Chertkov O."/>
            <person name="Schmutz J."/>
            <person name="Larimer F."/>
            <person name="Land M."/>
            <person name="Kyrpides N."/>
            <person name="Ivanova N."/>
            <person name="Richardson P."/>
        </authorList>
    </citation>
    <scope>NUCLEOTIDE SEQUENCE [LARGE SCALE GENOMIC DNA]</scope>
    <source>
        <strain>DSM 2380 / NBRC 103641 / GraBd1</strain>
    </source>
</reference>
<protein>
    <recommendedName>
        <fullName evidence="1">Aspartate carbamoyltransferase catalytic subunit</fullName>
        <ecNumber evidence="1">2.1.3.2</ecNumber>
    </recommendedName>
    <alternativeName>
        <fullName evidence="1">Aspartate transcarbamylase</fullName>
        <shortName evidence="1">ATCase</shortName>
    </alternativeName>
</protein>
<gene>
    <name evidence="1" type="primary">pyrB</name>
    <name type="ordered locus">Pcar_1615</name>
</gene>
<dbReference type="EC" id="2.1.3.2" evidence="1"/>
<dbReference type="EMBL" id="CP000142">
    <property type="protein sequence ID" value="ABA88859.1"/>
    <property type="molecule type" value="Genomic_DNA"/>
</dbReference>
<dbReference type="RefSeq" id="WP_011341346.1">
    <property type="nucleotide sequence ID" value="NC_007498.2"/>
</dbReference>
<dbReference type="SMR" id="Q3A448"/>
<dbReference type="STRING" id="338963.Pcar_1615"/>
<dbReference type="KEGG" id="pca:Pcar_1615"/>
<dbReference type="eggNOG" id="COG0540">
    <property type="taxonomic scope" value="Bacteria"/>
</dbReference>
<dbReference type="HOGENOM" id="CLU_043846_2_0_7"/>
<dbReference type="OrthoDB" id="9774690at2"/>
<dbReference type="UniPathway" id="UPA00070">
    <property type="reaction ID" value="UER00116"/>
</dbReference>
<dbReference type="Proteomes" id="UP000002534">
    <property type="component" value="Chromosome"/>
</dbReference>
<dbReference type="GO" id="GO:0005829">
    <property type="term" value="C:cytosol"/>
    <property type="evidence" value="ECO:0007669"/>
    <property type="project" value="TreeGrafter"/>
</dbReference>
<dbReference type="GO" id="GO:0016597">
    <property type="term" value="F:amino acid binding"/>
    <property type="evidence" value="ECO:0007669"/>
    <property type="project" value="InterPro"/>
</dbReference>
<dbReference type="GO" id="GO:0004070">
    <property type="term" value="F:aspartate carbamoyltransferase activity"/>
    <property type="evidence" value="ECO:0007669"/>
    <property type="project" value="UniProtKB-UniRule"/>
</dbReference>
<dbReference type="GO" id="GO:0006207">
    <property type="term" value="P:'de novo' pyrimidine nucleobase biosynthetic process"/>
    <property type="evidence" value="ECO:0007669"/>
    <property type="project" value="InterPro"/>
</dbReference>
<dbReference type="GO" id="GO:0044205">
    <property type="term" value="P:'de novo' UMP biosynthetic process"/>
    <property type="evidence" value="ECO:0007669"/>
    <property type="project" value="UniProtKB-UniRule"/>
</dbReference>
<dbReference type="GO" id="GO:0006520">
    <property type="term" value="P:amino acid metabolic process"/>
    <property type="evidence" value="ECO:0007669"/>
    <property type="project" value="InterPro"/>
</dbReference>
<dbReference type="FunFam" id="3.40.50.1370:FF:000007">
    <property type="entry name" value="Aspartate carbamoyltransferase"/>
    <property type="match status" value="1"/>
</dbReference>
<dbReference type="Gene3D" id="3.40.50.1370">
    <property type="entry name" value="Aspartate/ornithine carbamoyltransferase"/>
    <property type="match status" value="2"/>
</dbReference>
<dbReference type="HAMAP" id="MF_00001">
    <property type="entry name" value="Asp_carb_tr"/>
    <property type="match status" value="1"/>
</dbReference>
<dbReference type="InterPro" id="IPR006132">
    <property type="entry name" value="Asp/Orn_carbamoyltranf_P-bd"/>
</dbReference>
<dbReference type="InterPro" id="IPR006130">
    <property type="entry name" value="Asp/Orn_carbamoylTrfase"/>
</dbReference>
<dbReference type="InterPro" id="IPR036901">
    <property type="entry name" value="Asp/Orn_carbamoylTrfase_sf"/>
</dbReference>
<dbReference type="InterPro" id="IPR002082">
    <property type="entry name" value="Asp_carbamoyltransf"/>
</dbReference>
<dbReference type="InterPro" id="IPR006131">
    <property type="entry name" value="Asp_carbamoyltransf_Asp/Orn-bd"/>
</dbReference>
<dbReference type="NCBIfam" id="TIGR00670">
    <property type="entry name" value="asp_carb_tr"/>
    <property type="match status" value="1"/>
</dbReference>
<dbReference type="NCBIfam" id="NF002032">
    <property type="entry name" value="PRK00856.1"/>
    <property type="match status" value="1"/>
</dbReference>
<dbReference type="PANTHER" id="PTHR45753:SF6">
    <property type="entry name" value="ASPARTATE CARBAMOYLTRANSFERASE"/>
    <property type="match status" value="1"/>
</dbReference>
<dbReference type="PANTHER" id="PTHR45753">
    <property type="entry name" value="ORNITHINE CARBAMOYLTRANSFERASE, MITOCHONDRIAL"/>
    <property type="match status" value="1"/>
</dbReference>
<dbReference type="Pfam" id="PF00185">
    <property type="entry name" value="OTCace"/>
    <property type="match status" value="1"/>
</dbReference>
<dbReference type="Pfam" id="PF02729">
    <property type="entry name" value="OTCace_N"/>
    <property type="match status" value="1"/>
</dbReference>
<dbReference type="PRINTS" id="PR00100">
    <property type="entry name" value="AOTCASE"/>
</dbReference>
<dbReference type="PRINTS" id="PR00101">
    <property type="entry name" value="ATCASE"/>
</dbReference>
<dbReference type="SUPFAM" id="SSF53671">
    <property type="entry name" value="Aspartate/ornithine carbamoyltransferase"/>
    <property type="match status" value="1"/>
</dbReference>
<dbReference type="PROSITE" id="PS00097">
    <property type="entry name" value="CARBAMOYLTRANSFERASE"/>
    <property type="match status" value="1"/>
</dbReference>
<comment type="function">
    <text evidence="1">Catalyzes the condensation of carbamoyl phosphate and aspartate to form carbamoyl aspartate and inorganic phosphate, the committed step in the de novo pyrimidine nucleotide biosynthesis pathway.</text>
</comment>
<comment type="catalytic activity">
    <reaction evidence="1">
        <text>carbamoyl phosphate + L-aspartate = N-carbamoyl-L-aspartate + phosphate + H(+)</text>
        <dbReference type="Rhea" id="RHEA:20013"/>
        <dbReference type="ChEBI" id="CHEBI:15378"/>
        <dbReference type="ChEBI" id="CHEBI:29991"/>
        <dbReference type="ChEBI" id="CHEBI:32814"/>
        <dbReference type="ChEBI" id="CHEBI:43474"/>
        <dbReference type="ChEBI" id="CHEBI:58228"/>
        <dbReference type="EC" id="2.1.3.2"/>
    </reaction>
</comment>
<comment type="pathway">
    <text evidence="1">Pyrimidine metabolism; UMP biosynthesis via de novo pathway; (S)-dihydroorotate from bicarbonate: step 2/3.</text>
</comment>
<comment type="subunit">
    <text evidence="1">Heterododecamer (2C3:3R2) of six catalytic PyrB chains organized as two trimers (C3), and six regulatory PyrI chains organized as three dimers (R2).</text>
</comment>
<comment type="similarity">
    <text evidence="1">Belongs to the aspartate/ornithine carbamoyltransferase superfamily. ATCase family.</text>
</comment>
<sequence>MAFNHKHILGIEQMSAEDITLILDTAESFKDVSLRSIKKVPTLRGKTVINVFFEASTRTRTSFEIAGKRLSADTVNISASTSAVVKGETLEDTAKNLEAMKPDIIVMRHSCSGAPHYLAERCDFSVINAGDGAHEHPSQALLDLLTIRQKKGHIEGLTVAIIGDITHSRVARSNVYALNKLGAEVRLCGPGTMLPPGIERLGAQVFDRIDDAVSGADVVMMLRIQQERQGKTMLPSLREYSMFYGLTPDRMKLAKPDAIVMHPGPMNRGVEISSAVADGPQNVILDQVENGVAVRMALLYLVSGGEKLEDSAQ</sequence>
<accession>Q3A448</accession>
<feature type="chain" id="PRO_0000301600" description="Aspartate carbamoyltransferase catalytic subunit">
    <location>
        <begin position="1"/>
        <end position="313"/>
    </location>
</feature>
<feature type="binding site" evidence="1">
    <location>
        <position position="58"/>
    </location>
    <ligand>
        <name>carbamoyl phosphate</name>
        <dbReference type="ChEBI" id="CHEBI:58228"/>
    </ligand>
</feature>
<feature type="binding site" evidence="1">
    <location>
        <position position="59"/>
    </location>
    <ligand>
        <name>carbamoyl phosphate</name>
        <dbReference type="ChEBI" id="CHEBI:58228"/>
    </ligand>
</feature>
<feature type="binding site" evidence="1">
    <location>
        <position position="86"/>
    </location>
    <ligand>
        <name>L-aspartate</name>
        <dbReference type="ChEBI" id="CHEBI:29991"/>
    </ligand>
</feature>
<feature type="binding site" evidence="1">
    <location>
        <position position="108"/>
    </location>
    <ligand>
        <name>carbamoyl phosphate</name>
        <dbReference type="ChEBI" id="CHEBI:58228"/>
    </ligand>
</feature>
<feature type="binding site" evidence="1">
    <location>
        <position position="136"/>
    </location>
    <ligand>
        <name>carbamoyl phosphate</name>
        <dbReference type="ChEBI" id="CHEBI:58228"/>
    </ligand>
</feature>
<feature type="binding site" evidence="1">
    <location>
        <position position="139"/>
    </location>
    <ligand>
        <name>carbamoyl phosphate</name>
        <dbReference type="ChEBI" id="CHEBI:58228"/>
    </ligand>
</feature>
<feature type="binding site" evidence="1">
    <location>
        <position position="169"/>
    </location>
    <ligand>
        <name>L-aspartate</name>
        <dbReference type="ChEBI" id="CHEBI:29991"/>
    </ligand>
</feature>
<feature type="binding site" evidence="1">
    <location>
        <position position="223"/>
    </location>
    <ligand>
        <name>L-aspartate</name>
        <dbReference type="ChEBI" id="CHEBI:29991"/>
    </ligand>
</feature>
<feature type="binding site" evidence="1">
    <location>
        <position position="264"/>
    </location>
    <ligand>
        <name>carbamoyl phosphate</name>
        <dbReference type="ChEBI" id="CHEBI:58228"/>
    </ligand>
</feature>
<feature type="binding site" evidence="1">
    <location>
        <position position="265"/>
    </location>
    <ligand>
        <name>carbamoyl phosphate</name>
        <dbReference type="ChEBI" id="CHEBI:58228"/>
    </ligand>
</feature>
<proteinExistence type="inferred from homology"/>
<organism>
    <name type="scientific">Syntrophotalea carbinolica (strain DSM 2380 / NBRC 103641 / GraBd1)</name>
    <name type="common">Pelobacter carbinolicus</name>
    <dbReference type="NCBI Taxonomy" id="338963"/>
    <lineage>
        <taxon>Bacteria</taxon>
        <taxon>Pseudomonadati</taxon>
        <taxon>Thermodesulfobacteriota</taxon>
        <taxon>Desulfuromonadia</taxon>
        <taxon>Desulfuromonadales</taxon>
        <taxon>Syntrophotaleaceae</taxon>
        <taxon>Syntrophotalea</taxon>
    </lineage>
</organism>
<keyword id="KW-0665">Pyrimidine biosynthesis</keyword>
<keyword id="KW-1185">Reference proteome</keyword>
<keyword id="KW-0808">Transferase</keyword>
<evidence type="ECO:0000255" key="1">
    <source>
        <dbReference type="HAMAP-Rule" id="MF_00001"/>
    </source>
</evidence>